<feature type="chain" id="PRO_0000263285" description="Peptide chain release factor 1">
    <location>
        <begin position="1"/>
        <end position="352"/>
    </location>
</feature>
<feature type="region of interest" description="Disordered" evidence="2">
    <location>
        <begin position="288"/>
        <end position="309"/>
    </location>
</feature>
<feature type="compositionally biased region" description="Basic and acidic residues" evidence="2">
    <location>
        <begin position="289"/>
        <end position="306"/>
    </location>
</feature>
<feature type="modified residue" description="N5-methylglutamine" evidence="1">
    <location>
        <position position="233"/>
    </location>
</feature>
<evidence type="ECO:0000255" key="1">
    <source>
        <dbReference type="HAMAP-Rule" id="MF_00093"/>
    </source>
</evidence>
<evidence type="ECO:0000256" key="2">
    <source>
        <dbReference type="SAM" id="MobiDB-lite"/>
    </source>
</evidence>
<accession>Q1CV77</accession>
<name>RF1_HELPH</name>
<protein>
    <recommendedName>
        <fullName evidence="1">Peptide chain release factor 1</fullName>
        <shortName evidence="1">RF-1</shortName>
    </recommendedName>
</protein>
<keyword id="KW-0963">Cytoplasm</keyword>
<keyword id="KW-0488">Methylation</keyword>
<keyword id="KW-0648">Protein biosynthesis</keyword>
<sequence>MSILAEKLSSILKRYDELTALLSSAEVISDIKKLTELSKEQSSIEEISIASKEYLSVLENIKENKELLEDKELSELAKEELKILEIQKSDLETAIKQLLIPKDPNDDKNIYLELRAGTGGNEAGIFVGDLFKAYCRYADLKKWRVEIVSSSENSVGGYKEIIALIKGKGVYSRLKFEAGTHRVQRVPETESQGRIHTSAITVAIMPEVDDVEVSINPSDLKIEVFRAGGHGGQCVNTTDSAVRITHLPTNISVSMQDEKSQHKNKDKALKILKARLYEKQIEEQQLANAKDRKEQVGSGDRSERIRTYNYPQNRLSEHRINLTLYSLEEIMLSGNLDEVINPLIAHAQSQFE</sequence>
<organism>
    <name type="scientific">Helicobacter pylori (strain HPAG1)</name>
    <dbReference type="NCBI Taxonomy" id="357544"/>
    <lineage>
        <taxon>Bacteria</taxon>
        <taxon>Pseudomonadati</taxon>
        <taxon>Campylobacterota</taxon>
        <taxon>Epsilonproteobacteria</taxon>
        <taxon>Campylobacterales</taxon>
        <taxon>Helicobacteraceae</taxon>
        <taxon>Helicobacter</taxon>
    </lineage>
</organism>
<reference key="1">
    <citation type="journal article" date="2006" name="Proc. Natl. Acad. Sci. U.S.A.">
        <title>The complete genome sequence of a chronic atrophic gastritis Helicobacter pylori strain: evolution during disease progression.</title>
        <authorList>
            <person name="Oh J.D."/>
            <person name="Kling-Baeckhed H."/>
            <person name="Giannakis M."/>
            <person name="Xu J."/>
            <person name="Fulton R.S."/>
            <person name="Fulton L.A."/>
            <person name="Cordum H.S."/>
            <person name="Wang C."/>
            <person name="Elliott G."/>
            <person name="Edwards J."/>
            <person name="Mardis E.R."/>
            <person name="Engstrand L.G."/>
            <person name="Gordon J.I."/>
        </authorList>
    </citation>
    <scope>NUCLEOTIDE SEQUENCE [LARGE SCALE GENOMIC DNA]</scope>
    <source>
        <strain>HPAG1</strain>
    </source>
</reference>
<comment type="function">
    <text evidence="1">Peptide chain release factor 1 directs the termination of translation in response to the peptide chain termination codons UAG and UAA.</text>
</comment>
<comment type="subcellular location">
    <subcellularLocation>
        <location evidence="1">Cytoplasm</location>
    </subcellularLocation>
</comment>
<comment type="PTM">
    <text evidence="1">Methylated by PrmC. Methylation increases the termination efficiency of RF1.</text>
</comment>
<comment type="similarity">
    <text evidence="1">Belongs to the prokaryotic/mitochondrial release factor family.</text>
</comment>
<gene>
    <name evidence="1" type="primary">prfA</name>
    <name type="ordered locus">HPAG1_0078</name>
</gene>
<proteinExistence type="inferred from homology"/>
<dbReference type="EMBL" id="CP000241">
    <property type="protein sequence ID" value="ABF84145.1"/>
    <property type="molecule type" value="Genomic_DNA"/>
</dbReference>
<dbReference type="RefSeq" id="WP_000025116.1">
    <property type="nucleotide sequence ID" value="NC_008086.1"/>
</dbReference>
<dbReference type="SMR" id="Q1CV77"/>
<dbReference type="KEGG" id="hpa:HPAG1_0078"/>
<dbReference type="HOGENOM" id="CLU_036856_0_1_7"/>
<dbReference type="GO" id="GO:0005737">
    <property type="term" value="C:cytoplasm"/>
    <property type="evidence" value="ECO:0007669"/>
    <property type="project" value="UniProtKB-SubCell"/>
</dbReference>
<dbReference type="GO" id="GO:0016149">
    <property type="term" value="F:translation release factor activity, codon specific"/>
    <property type="evidence" value="ECO:0007669"/>
    <property type="project" value="UniProtKB-UniRule"/>
</dbReference>
<dbReference type="FunFam" id="3.30.160.20:FF:000004">
    <property type="entry name" value="Peptide chain release factor 1"/>
    <property type="match status" value="1"/>
</dbReference>
<dbReference type="FunFam" id="3.30.70.1660:FF:000002">
    <property type="entry name" value="Peptide chain release factor 1"/>
    <property type="match status" value="1"/>
</dbReference>
<dbReference type="FunFam" id="3.30.70.1660:FF:000004">
    <property type="entry name" value="Peptide chain release factor 1"/>
    <property type="match status" value="1"/>
</dbReference>
<dbReference type="Gene3D" id="3.30.160.20">
    <property type="match status" value="1"/>
</dbReference>
<dbReference type="Gene3D" id="3.30.70.1660">
    <property type="match status" value="1"/>
</dbReference>
<dbReference type="Gene3D" id="6.10.140.1950">
    <property type="match status" value="1"/>
</dbReference>
<dbReference type="HAMAP" id="MF_00093">
    <property type="entry name" value="Rel_fac_1"/>
    <property type="match status" value="1"/>
</dbReference>
<dbReference type="InterPro" id="IPR005139">
    <property type="entry name" value="PCRF"/>
</dbReference>
<dbReference type="InterPro" id="IPR000352">
    <property type="entry name" value="Pep_chain_release_fac_I"/>
</dbReference>
<dbReference type="InterPro" id="IPR045853">
    <property type="entry name" value="Pep_chain_release_fac_I_sf"/>
</dbReference>
<dbReference type="InterPro" id="IPR050057">
    <property type="entry name" value="Prokaryotic/Mito_RF"/>
</dbReference>
<dbReference type="InterPro" id="IPR004373">
    <property type="entry name" value="RF-1"/>
</dbReference>
<dbReference type="NCBIfam" id="TIGR00019">
    <property type="entry name" value="prfA"/>
    <property type="match status" value="1"/>
</dbReference>
<dbReference type="NCBIfam" id="NF001859">
    <property type="entry name" value="PRK00591.1"/>
    <property type="match status" value="1"/>
</dbReference>
<dbReference type="PANTHER" id="PTHR43804">
    <property type="entry name" value="LD18447P"/>
    <property type="match status" value="1"/>
</dbReference>
<dbReference type="PANTHER" id="PTHR43804:SF7">
    <property type="entry name" value="LD18447P"/>
    <property type="match status" value="1"/>
</dbReference>
<dbReference type="Pfam" id="PF03462">
    <property type="entry name" value="PCRF"/>
    <property type="match status" value="1"/>
</dbReference>
<dbReference type="Pfam" id="PF00472">
    <property type="entry name" value="RF-1"/>
    <property type="match status" value="1"/>
</dbReference>
<dbReference type="SMART" id="SM00937">
    <property type="entry name" value="PCRF"/>
    <property type="match status" value="1"/>
</dbReference>
<dbReference type="SUPFAM" id="SSF75620">
    <property type="entry name" value="Release factor"/>
    <property type="match status" value="1"/>
</dbReference>
<dbReference type="PROSITE" id="PS00745">
    <property type="entry name" value="RF_PROK_I"/>
    <property type="match status" value="1"/>
</dbReference>